<feature type="chain" id="PRO_0000099530" description="Entry-fusion complex protein OPG086">
    <location>
        <begin position="1"/>
        <end position="103"/>
    </location>
</feature>
<feature type="transmembrane region" description="Helical; Signal-anchor" evidence="2">
    <location>
        <begin position="1"/>
        <end position="21"/>
    </location>
</feature>
<feature type="topological domain" description="Virion surface" evidence="2">
    <location>
        <begin position="22"/>
        <end position="103"/>
    </location>
</feature>
<accession>Q9J5D2</accession>
<organismHost>
    <name type="scientific">Vertebrata</name>
    <dbReference type="NCBI Taxonomy" id="7742"/>
</organismHost>
<sequence>MTLFLVIFFILFLLLCYFFSFKRTNKMEIGINPIKKIPWSDNEHIFVSSLFTNKDKYLTGPMRLTYRPDSKTAVLDFKGTNYTYYLDNFDDVRKLVPTLLLSK</sequence>
<evidence type="ECO:0000250" key="1">
    <source>
        <dbReference type="UniProtKB" id="P68458"/>
    </source>
</evidence>
<evidence type="ECO:0000255" key="2"/>
<evidence type="ECO:0000305" key="3"/>
<dbReference type="EMBL" id="AF198100">
    <property type="protein sequence ID" value="AAF44422.1"/>
    <property type="molecule type" value="Genomic_DNA"/>
</dbReference>
<dbReference type="RefSeq" id="NP_039042.1">
    <property type="nucleotide sequence ID" value="NC_002188.1"/>
</dbReference>
<dbReference type="SMR" id="Q9J5D2"/>
<dbReference type="GeneID" id="1486626"/>
<dbReference type="KEGG" id="vg:1486626"/>
<dbReference type="Proteomes" id="UP000008597">
    <property type="component" value="Segment"/>
</dbReference>
<dbReference type="GO" id="GO:0016020">
    <property type="term" value="C:membrane"/>
    <property type="evidence" value="ECO:0007669"/>
    <property type="project" value="UniProtKB-KW"/>
</dbReference>
<dbReference type="GO" id="GO:0019031">
    <property type="term" value="C:viral envelope"/>
    <property type="evidence" value="ECO:0007669"/>
    <property type="project" value="UniProtKB-KW"/>
</dbReference>
<dbReference type="GO" id="GO:0055036">
    <property type="term" value="C:virion membrane"/>
    <property type="evidence" value="ECO:0007669"/>
    <property type="project" value="UniProtKB-SubCell"/>
</dbReference>
<dbReference type="GO" id="GO:0019064">
    <property type="term" value="P:fusion of virus membrane with host plasma membrane"/>
    <property type="evidence" value="ECO:0007669"/>
    <property type="project" value="UniProtKB-KW"/>
</dbReference>
<dbReference type="GO" id="GO:0046718">
    <property type="term" value="P:symbiont entry into host cell"/>
    <property type="evidence" value="ECO:0007669"/>
    <property type="project" value="UniProtKB-KW"/>
</dbReference>
<dbReference type="InterPro" id="IPR010367">
    <property type="entry name" value="Poxvirus_G3"/>
</dbReference>
<dbReference type="Pfam" id="PF06129">
    <property type="entry name" value="Chordopox_G3"/>
    <property type="match status" value="1"/>
</dbReference>
<reference key="1">
    <citation type="journal article" date="2000" name="J. Virol.">
        <title>The genome of fowlpox virus.</title>
        <authorList>
            <person name="Afonso C.L."/>
            <person name="Tulman E.R."/>
            <person name="Lu Z."/>
            <person name="Zsak L."/>
            <person name="Kutish G.F."/>
            <person name="Rock D.L."/>
        </authorList>
    </citation>
    <scope>NUCLEOTIDE SEQUENCE [LARGE SCALE GENOMIC DNA]</scope>
</reference>
<name>PG086_FOWPN</name>
<comment type="function">
    <text evidence="1">Component of the entry fusion complex (EFC), which consists of 11 proteins. During cell infection, this complex mediates entry of the virion core into the host cytoplasm by a two-step mechanism consisting of lipid mixing of the viral and cellular membranes and subsequent pore formation.</text>
</comment>
<comment type="subunit">
    <text evidence="1">Interacts with OPG099/L5. Component of the entry fusion complex (EFC) composed of OPG053, OPG076, OPG086, OPG094, OPG095, OPG099, OPG107, OPG143, OPG104, OPG147 and OPG155. Except for OPG095 and OPG053, each of the EFC proteins is required for assembly or stability of the complex.</text>
</comment>
<comment type="subcellular location">
    <subcellularLocation>
        <location evidence="1">Virion membrane</location>
        <topology evidence="1">Single-pass membrane protein</topology>
    </subcellularLocation>
    <text evidence="1">Component of the mature virion (MV) membrane.</text>
</comment>
<comment type="induction">
    <text evidence="1">Expressed in the late phase of the viral replicative cycle.</text>
</comment>
<comment type="PTM">
    <text evidence="1">Unglycosylated because produced in viral factories instead of the classic ER -Golgi route.</text>
</comment>
<comment type="similarity">
    <text evidence="3">Belongs to the orthopoxvirus OPG086 family.</text>
</comment>
<gene>
    <name type="primary">OPG086</name>
    <name type="ordered locus">FPV078</name>
</gene>
<proteinExistence type="inferred from homology"/>
<keyword id="KW-1169">Fusion of virus membrane with host cell membrane</keyword>
<keyword id="KW-1168">Fusion of virus membrane with host membrane</keyword>
<keyword id="KW-0426">Late protein</keyword>
<keyword id="KW-0472">Membrane</keyword>
<keyword id="KW-1185">Reference proteome</keyword>
<keyword id="KW-0735">Signal-anchor</keyword>
<keyword id="KW-0812">Transmembrane</keyword>
<keyword id="KW-1133">Transmembrane helix</keyword>
<keyword id="KW-0261">Viral envelope protein</keyword>
<keyword id="KW-1162">Viral penetration into host cytoplasm</keyword>
<keyword id="KW-0946">Virion</keyword>
<keyword id="KW-1160">Virus entry into host cell</keyword>
<protein>
    <recommendedName>
        <fullName>Entry-fusion complex protein OPG086</fullName>
        <shortName>EFC protein OPG086</shortName>
    </recommendedName>
    <alternativeName>
        <fullName>Protein FPV078</fullName>
    </alternativeName>
    <alternativeName>
        <fullName>Protein G3 homolog</fullName>
    </alternativeName>
</protein>
<organism>
    <name type="scientific">Fowlpox virus (strain NVSL)</name>
    <name type="common">FPV</name>
    <dbReference type="NCBI Taxonomy" id="928301"/>
    <lineage>
        <taxon>Viruses</taxon>
        <taxon>Varidnaviria</taxon>
        <taxon>Bamfordvirae</taxon>
        <taxon>Nucleocytoviricota</taxon>
        <taxon>Pokkesviricetes</taxon>
        <taxon>Chitovirales</taxon>
        <taxon>Poxviridae</taxon>
        <taxon>Chordopoxvirinae</taxon>
        <taxon>Avipoxvirus</taxon>
        <taxon>Fowlpox virus</taxon>
    </lineage>
</organism>